<evidence type="ECO:0000255" key="1">
    <source>
        <dbReference type="HAMAP-Rule" id="MF_00044"/>
    </source>
</evidence>
<feature type="chain" id="PRO_0000235508" description="Aspartate--tRNA ligase">
    <location>
        <begin position="1"/>
        <end position="585"/>
    </location>
</feature>
<feature type="region of interest" description="Aspartate" evidence="1">
    <location>
        <begin position="197"/>
        <end position="200"/>
    </location>
</feature>
<feature type="binding site" evidence="1">
    <location>
        <position position="173"/>
    </location>
    <ligand>
        <name>L-aspartate</name>
        <dbReference type="ChEBI" id="CHEBI:29991"/>
    </ligand>
</feature>
<feature type="binding site" evidence="1">
    <location>
        <begin position="219"/>
        <end position="221"/>
    </location>
    <ligand>
        <name>ATP</name>
        <dbReference type="ChEBI" id="CHEBI:30616"/>
    </ligand>
</feature>
<feature type="binding site" evidence="1">
    <location>
        <position position="219"/>
    </location>
    <ligand>
        <name>L-aspartate</name>
        <dbReference type="ChEBI" id="CHEBI:29991"/>
    </ligand>
</feature>
<feature type="binding site" evidence="1">
    <location>
        <position position="228"/>
    </location>
    <ligand>
        <name>ATP</name>
        <dbReference type="ChEBI" id="CHEBI:30616"/>
    </ligand>
</feature>
<feature type="binding site" evidence="1">
    <location>
        <position position="446"/>
    </location>
    <ligand>
        <name>L-aspartate</name>
        <dbReference type="ChEBI" id="CHEBI:29991"/>
    </ligand>
</feature>
<feature type="binding site" evidence="1">
    <location>
        <position position="480"/>
    </location>
    <ligand>
        <name>ATP</name>
        <dbReference type="ChEBI" id="CHEBI:30616"/>
    </ligand>
</feature>
<feature type="binding site" evidence="1">
    <location>
        <position position="487"/>
    </location>
    <ligand>
        <name>L-aspartate</name>
        <dbReference type="ChEBI" id="CHEBI:29991"/>
    </ligand>
</feature>
<feature type="binding site" evidence="1">
    <location>
        <begin position="532"/>
        <end position="535"/>
    </location>
    <ligand>
        <name>ATP</name>
        <dbReference type="ChEBI" id="CHEBI:30616"/>
    </ligand>
</feature>
<protein>
    <recommendedName>
        <fullName evidence="1">Aspartate--tRNA ligase</fullName>
        <ecNumber evidence="1">6.1.1.12</ecNumber>
    </recommendedName>
    <alternativeName>
        <fullName evidence="1">Aspartyl-tRNA synthetase</fullName>
        <shortName evidence="1">AspRS</shortName>
    </alternativeName>
</protein>
<name>SYD_BACFN</name>
<gene>
    <name evidence="1" type="primary">aspS</name>
    <name type="ordered locus">BF2463</name>
</gene>
<dbReference type="EC" id="6.1.1.12" evidence="1"/>
<dbReference type="EMBL" id="CR626927">
    <property type="protein sequence ID" value="CAH08163.1"/>
    <property type="molecule type" value="Genomic_DNA"/>
</dbReference>
<dbReference type="RefSeq" id="WP_005803557.1">
    <property type="nucleotide sequence ID" value="NZ_UFTH01000001.1"/>
</dbReference>
<dbReference type="SMR" id="Q5LCK2"/>
<dbReference type="PaxDb" id="272559-BF9343_2382"/>
<dbReference type="GeneID" id="60366328"/>
<dbReference type="KEGG" id="bfs:BF9343_2382"/>
<dbReference type="eggNOG" id="COG0173">
    <property type="taxonomic scope" value="Bacteria"/>
</dbReference>
<dbReference type="HOGENOM" id="CLU_014330_3_2_10"/>
<dbReference type="Proteomes" id="UP000006731">
    <property type="component" value="Chromosome"/>
</dbReference>
<dbReference type="GO" id="GO:0005737">
    <property type="term" value="C:cytoplasm"/>
    <property type="evidence" value="ECO:0007669"/>
    <property type="project" value="UniProtKB-SubCell"/>
</dbReference>
<dbReference type="GO" id="GO:0004815">
    <property type="term" value="F:aspartate-tRNA ligase activity"/>
    <property type="evidence" value="ECO:0007669"/>
    <property type="project" value="UniProtKB-UniRule"/>
</dbReference>
<dbReference type="GO" id="GO:0005524">
    <property type="term" value="F:ATP binding"/>
    <property type="evidence" value="ECO:0007669"/>
    <property type="project" value="UniProtKB-UniRule"/>
</dbReference>
<dbReference type="GO" id="GO:0003676">
    <property type="term" value="F:nucleic acid binding"/>
    <property type="evidence" value="ECO:0007669"/>
    <property type="project" value="InterPro"/>
</dbReference>
<dbReference type="GO" id="GO:0006422">
    <property type="term" value="P:aspartyl-tRNA aminoacylation"/>
    <property type="evidence" value="ECO:0007669"/>
    <property type="project" value="UniProtKB-UniRule"/>
</dbReference>
<dbReference type="CDD" id="cd00777">
    <property type="entry name" value="AspRS_core"/>
    <property type="match status" value="1"/>
</dbReference>
<dbReference type="CDD" id="cd04317">
    <property type="entry name" value="EcAspRS_like_N"/>
    <property type="match status" value="1"/>
</dbReference>
<dbReference type="Gene3D" id="3.30.930.10">
    <property type="entry name" value="Bira Bifunctional Protein, Domain 2"/>
    <property type="match status" value="1"/>
</dbReference>
<dbReference type="Gene3D" id="3.30.1360.30">
    <property type="entry name" value="GAD-like domain"/>
    <property type="match status" value="1"/>
</dbReference>
<dbReference type="Gene3D" id="2.40.50.140">
    <property type="entry name" value="Nucleic acid-binding proteins"/>
    <property type="match status" value="1"/>
</dbReference>
<dbReference type="HAMAP" id="MF_00044">
    <property type="entry name" value="Asp_tRNA_synth_type1"/>
    <property type="match status" value="1"/>
</dbReference>
<dbReference type="InterPro" id="IPR004364">
    <property type="entry name" value="Aa-tRNA-synt_II"/>
</dbReference>
<dbReference type="InterPro" id="IPR006195">
    <property type="entry name" value="aa-tRNA-synth_II"/>
</dbReference>
<dbReference type="InterPro" id="IPR045864">
    <property type="entry name" value="aa-tRNA-synth_II/BPL/LPL"/>
</dbReference>
<dbReference type="InterPro" id="IPR004524">
    <property type="entry name" value="Asp-tRNA-ligase_1"/>
</dbReference>
<dbReference type="InterPro" id="IPR047089">
    <property type="entry name" value="Asp-tRNA-ligase_1_N"/>
</dbReference>
<dbReference type="InterPro" id="IPR002312">
    <property type="entry name" value="Asp/Asn-tRNA-synth_IIb"/>
</dbReference>
<dbReference type="InterPro" id="IPR047090">
    <property type="entry name" value="AspRS_core"/>
</dbReference>
<dbReference type="InterPro" id="IPR004115">
    <property type="entry name" value="GAD-like_sf"/>
</dbReference>
<dbReference type="InterPro" id="IPR029351">
    <property type="entry name" value="GAD_dom"/>
</dbReference>
<dbReference type="InterPro" id="IPR012340">
    <property type="entry name" value="NA-bd_OB-fold"/>
</dbReference>
<dbReference type="InterPro" id="IPR004365">
    <property type="entry name" value="NA-bd_OB_tRNA"/>
</dbReference>
<dbReference type="NCBIfam" id="TIGR00459">
    <property type="entry name" value="aspS_bact"/>
    <property type="match status" value="1"/>
</dbReference>
<dbReference type="NCBIfam" id="NF001750">
    <property type="entry name" value="PRK00476.1"/>
    <property type="match status" value="1"/>
</dbReference>
<dbReference type="PANTHER" id="PTHR22594:SF5">
    <property type="entry name" value="ASPARTATE--TRNA LIGASE, MITOCHONDRIAL"/>
    <property type="match status" value="1"/>
</dbReference>
<dbReference type="PANTHER" id="PTHR22594">
    <property type="entry name" value="ASPARTYL/LYSYL-TRNA SYNTHETASE"/>
    <property type="match status" value="1"/>
</dbReference>
<dbReference type="Pfam" id="PF02938">
    <property type="entry name" value="GAD"/>
    <property type="match status" value="1"/>
</dbReference>
<dbReference type="Pfam" id="PF00152">
    <property type="entry name" value="tRNA-synt_2"/>
    <property type="match status" value="1"/>
</dbReference>
<dbReference type="Pfam" id="PF01336">
    <property type="entry name" value="tRNA_anti-codon"/>
    <property type="match status" value="1"/>
</dbReference>
<dbReference type="PRINTS" id="PR01042">
    <property type="entry name" value="TRNASYNTHASP"/>
</dbReference>
<dbReference type="SUPFAM" id="SSF55681">
    <property type="entry name" value="Class II aaRS and biotin synthetases"/>
    <property type="match status" value="1"/>
</dbReference>
<dbReference type="SUPFAM" id="SSF55261">
    <property type="entry name" value="GAD domain-like"/>
    <property type="match status" value="1"/>
</dbReference>
<dbReference type="SUPFAM" id="SSF50249">
    <property type="entry name" value="Nucleic acid-binding proteins"/>
    <property type="match status" value="1"/>
</dbReference>
<dbReference type="PROSITE" id="PS50862">
    <property type="entry name" value="AA_TRNA_LIGASE_II"/>
    <property type="match status" value="1"/>
</dbReference>
<proteinExistence type="inferred from homology"/>
<organism>
    <name type="scientific">Bacteroides fragilis (strain ATCC 25285 / DSM 2151 / CCUG 4856 / JCM 11019 / LMG 10263 / NCTC 9343 / Onslow / VPI 2553 / EN-2)</name>
    <dbReference type="NCBI Taxonomy" id="272559"/>
    <lineage>
        <taxon>Bacteria</taxon>
        <taxon>Pseudomonadati</taxon>
        <taxon>Bacteroidota</taxon>
        <taxon>Bacteroidia</taxon>
        <taxon>Bacteroidales</taxon>
        <taxon>Bacteroidaceae</taxon>
        <taxon>Bacteroides</taxon>
    </lineage>
</organism>
<accession>Q5LCK2</accession>
<reference key="1">
    <citation type="journal article" date="2005" name="Science">
        <title>Extensive DNA inversions in the B. fragilis genome control variable gene expression.</title>
        <authorList>
            <person name="Cerdeno-Tarraga A.-M."/>
            <person name="Patrick S."/>
            <person name="Crossman L.C."/>
            <person name="Blakely G."/>
            <person name="Abratt V."/>
            <person name="Lennard N."/>
            <person name="Poxton I."/>
            <person name="Duerden B."/>
            <person name="Harris B."/>
            <person name="Quail M.A."/>
            <person name="Barron A."/>
            <person name="Clark L."/>
            <person name="Corton C."/>
            <person name="Doggett J."/>
            <person name="Holden M.T.G."/>
            <person name="Larke N."/>
            <person name="Line A."/>
            <person name="Lord A."/>
            <person name="Norbertczak H."/>
            <person name="Ormond D."/>
            <person name="Price C."/>
            <person name="Rabbinowitsch E."/>
            <person name="Woodward J."/>
            <person name="Barrell B.G."/>
            <person name="Parkhill J."/>
        </authorList>
    </citation>
    <scope>NUCLEOTIDE SEQUENCE [LARGE SCALE GENOMIC DNA]</scope>
    <source>
        <strain>ATCC 25285 / DSM 2151 / CCUG 4856 / JCM 11019 / LMG 10263 / NCTC 9343 / Onslow / VPI 2553 / EN-2</strain>
    </source>
</reference>
<keyword id="KW-0030">Aminoacyl-tRNA synthetase</keyword>
<keyword id="KW-0067">ATP-binding</keyword>
<keyword id="KW-0963">Cytoplasm</keyword>
<keyword id="KW-0436">Ligase</keyword>
<keyword id="KW-0547">Nucleotide-binding</keyword>
<keyword id="KW-0648">Protein biosynthesis</keyword>
<comment type="function">
    <text evidence="1">Catalyzes the attachment of L-aspartate to tRNA(Asp) in a two-step reaction: L-aspartate is first activated by ATP to form Asp-AMP and then transferred to the acceptor end of tRNA(Asp).</text>
</comment>
<comment type="catalytic activity">
    <reaction evidence="1">
        <text>tRNA(Asp) + L-aspartate + ATP = L-aspartyl-tRNA(Asp) + AMP + diphosphate</text>
        <dbReference type="Rhea" id="RHEA:19649"/>
        <dbReference type="Rhea" id="RHEA-COMP:9660"/>
        <dbReference type="Rhea" id="RHEA-COMP:9678"/>
        <dbReference type="ChEBI" id="CHEBI:29991"/>
        <dbReference type="ChEBI" id="CHEBI:30616"/>
        <dbReference type="ChEBI" id="CHEBI:33019"/>
        <dbReference type="ChEBI" id="CHEBI:78442"/>
        <dbReference type="ChEBI" id="CHEBI:78516"/>
        <dbReference type="ChEBI" id="CHEBI:456215"/>
        <dbReference type="EC" id="6.1.1.12"/>
    </reaction>
</comment>
<comment type="subunit">
    <text evidence="1">Homodimer.</text>
</comment>
<comment type="subcellular location">
    <subcellularLocation>
        <location evidence="1">Cytoplasm</location>
    </subcellularLocation>
</comment>
<comment type="similarity">
    <text evidence="1">Belongs to the class-II aminoacyl-tRNA synthetase family. Type 1 subfamily.</text>
</comment>
<sequence>MFRTHTCGELRISDVNKQVKLSGWVQRSRKMGGMTFVDLRDRYGITQLVFNEEIDAELCERANKLGREFVIQIVGTVNERFSKNSHIPTGDIEIIVSELNILNSAITPPFTIEDNTDGGDDIRMKYRYLDLRRSAVRSNLELRHKMTIEVRSYLDKLGFLEVETPVLIGSTPEGARDFVVPSRMNPGQFYALPQSPQTLKQLLMVSGFDRYFQIAKCFRDEDLRADRQPEFTQIDCEMSFVEQEDVITTFEGMAKHLFKVIRNIELTEPFPRMPWSEAMRLYGSDKPDIRFGMQFVELMDILKGHGFSVFDNATYIGGICAEGAAGYTRKQLDALTEFVKKPQIGAKGMVYARIEADGTVKSSVDKFYTQEVLQQLKEAFGAKPGDLILILSGDDAMKTRKQLCELRLEMGNQLGLRDKNTFACLWVVDFPLFEWSEEEGRLMAMHHPFTSPKPEDIHLLDTNPAAVRANAYDMVINGVEVGGGSIRIHDSQLQNKMFELLGFTPERAQEQFGFLMNAFKFGAPPHGGLAYGLDRWVSLFAGLDSIRDCIAFPKNNSGRDVMLDAPAALDPSQLEELNLIVDIKE</sequence>